<feature type="chain" id="PRO_0000216787" description="Anaerobic nitric oxide reductase flavorubredoxin homolog">
    <location>
        <begin position="1"/>
        <end position="411"/>
    </location>
</feature>
<feature type="domain" description="Rubredoxin-like" evidence="2">
    <location>
        <begin position="355"/>
        <end position="406"/>
    </location>
</feature>
<feature type="region of interest" description="Zinc metallo-hydrolase">
    <location>
        <begin position="30"/>
        <end position="210"/>
    </location>
</feature>
<feature type="binding site" evidence="2">
    <location>
        <position position="79"/>
    </location>
    <ligand>
        <name>Fe cation</name>
        <dbReference type="ChEBI" id="CHEBI:24875"/>
        <label>1</label>
    </ligand>
</feature>
<feature type="binding site" evidence="2">
    <location>
        <position position="81"/>
    </location>
    <ligand>
        <name>Fe cation</name>
        <dbReference type="ChEBI" id="CHEBI:24875"/>
        <label>1</label>
    </ligand>
</feature>
<feature type="binding site" evidence="2">
    <location>
        <position position="83"/>
    </location>
    <ligand>
        <name>Fe cation</name>
        <dbReference type="ChEBI" id="CHEBI:24875"/>
        <label>2</label>
    </ligand>
</feature>
<feature type="binding site" evidence="2">
    <location>
        <position position="147"/>
    </location>
    <ligand>
        <name>Fe cation</name>
        <dbReference type="ChEBI" id="CHEBI:24875"/>
        <label>1</label>
    </ligand>
</feature>
<feature type="binding site" evidence="2">
    <location>
        <position position="166"/>
    </location>
    <ligand>
        <name>Fe cation</name>
        <dbReference type="ChEBI" id="CHEBI:24875"/>
        <label>1</label>
    </ligand>
</feature>
<feature type="binding site" evidence="2">
    <location>
        <position position="166"/>
    </location>
    <ligand>
        <name>Fe cation</name>
        <dbReference type="ChEBI" id="CHEBI:24875"/>
        <label>2</label>
    </ligand>
</feature>
<feature type="binding site" evidence="2">
    <location>
        <position position="227"/>
    </location>
    <ligand>
        <name>Fe cation</name>
        <dbReference type="ChEBI" id="CHEBI:24875"/>
        <label>2</label>
    </ligand>
</feature>
<feature type="binding site" evidence="2">
    <location>
        <position position="360"/>
    </location>
    <ligand>
        <name>Fe cation</name>
        <dbReference type="ChEBI" id="CHEBI:24875"/>
        <label>3</label>
    </ligand>
</feature>
<feature type="binding site" evidence="2">
    <location>
        <position position="363"/>
    </location>
    <ligand>
        <name>Fe cation</name>
        <dbReference type="ChEBI" id="CHEBI:24875"/>
        <label>3</label>
    </ligand>
</feature>
<feature type="binding site" evidence="2">
    <location>
        <position position="393"/>
    </location>
    <ligand>
        <name>Fe cation</name>
        <dbReference type="ChEBI" id="CHEBI:24875"/>
        <label>3</label>
    </ligand>
</feature>
<feature type="binding site" evidence="2">
    <location>
        <position position="396"/>
    </location>
    <ligand>
        <name>Fe cation</name>
        <dbReference type="ChEBI" id="CHEBI:24875"/>
        <label>3</label>
    </ligand>
</feature>
<organism>
    <name type="scientific">Escherichia coli O157:H7</name>
    <dbReference type="NCBI Taxonomy" id="83334"/>
    <lineage>
        <taxon>Bacteria</taxon>
        <taxon>Pseudomonadati</taxon>
        <taxon>Pseudomonadota</taxon>
        <taxon>Gammaproteobacteria</taxon>
        <taxon>Enterobacterales</taxon>
        <taxon>Enterobacteriaceae</taxon>
        <taxon>Escherichia</taxon>
    </lineage>
</organism>
<name>NORV_ECO57</name>
<comment type="function">
    <text evidence="1">Anaerobic nitric oxide reductase; uses NADH to detoxify nitric oxide (NO), protecting several 4Fe-4S NO-sensitive enzymes. Has at least 2 reductase partners, only one of which (NorW, flavorubredoxin reductase) has been identified. NO probably binds to the di-iron center. Also able to function as an aerobic oxygen reductase (By similarity).</text>
</comment>
<comment type="cofactor">
    <cofactor evidence="2">
        <name>Fe cation</name>
        <dbReference type="ChEBI" id="CHEBI:24875"/>
    </cofactor>
    <text evidence="2">Binds 3 Fe cations per monomer.</text>
</comment>
<comment type="pathway">
    <text evidence="2">Nitrogen metabolism; nitric oxide reduction.</text>
</comment>
<comment type="subunit">
    <text evidence="2">Homotetramer.</text>
</comment>
<comment type="subcellular location">
    <subcellularLocation>
        <location evidence="2">Cytoplasm</location>
    </subcellularLocation>
</comment>
<comment type="similarity">
    <text evidence="2">In the N-terminal section; belongs to the zinc metallo-hydrolase group 3 family.</text>
</comment>
<comment type="caution">
    <text evidence="3">This protein is missing the flavodoxin-like domain seen in orthologs.</text>
</comment>
<protein>
    <recommendedName>
        <fullName evidence="2">Anaerobic nitric oxide reductase flavorubredoxin homolog</fullName>
        <shortName evidence="2">FlRd homolog</shortName>
        <shortName evidence="2">FlavoRb homolog</shortName>
    </recommendedName>
</protein>
<dbReference type="EMBL" id="AE005174">
    <property type="protein sequence ID" value="AAG57817.1"/>
    <property type="molecule type" value="Genomic_DNA"/>
</dbReference>
<dbReference type="EMBL" id="BA000007">
    <property type="protein sequence ID" value="BAB36989.1"/>
    <property type="molecule type" value="Genomic_DNA"/>
</dbReference>
<dbReference type="PIR" id="E85919">
    <property type="entry name" value="E85919"/>
</dbReference>
<dbReference type="PIR" id="F91074">
    <property type="entry name" value="F91074"/>
</dbReference>
<dbReference type="RefSeq" id="NP_311593.1">
    <property type="nucleotide sequence ID" value="NC_002695.1"/>
</dbReference>
<dbReference type="RefSeq" id="WP_000029603.1">
    <property type="nucleotide sequence ID" value="NZ_SDVX01000004.1"/>
</dbReference>
<dbReference type="SMR" id="Q8X852"/>
<dbReference type="STRING" id="155864.Z4018"/>
<dbReference type="GeneID" id="914712"/>
<dbReference type="KEGG" id="ece:Z4018"/>
<dbReference type="KEGG" id="ecs:ECs_3566"/>
<dbReference type="PATRIC" id="fig|386585.9.peg.3726"/>
<dbReference type="eggNOG" id="COG0426">
    <property type="taxonomic scope" value="Bacteria"/>
</dbReference>
<dbReference type="eggNOG" id="COG1773">
    <property type="taxonomic scope" value="Bacteria"/>
</dbReference>
<dbReference type="HOGENOM" id="CLU_017490_0_1_6"/>
<dbReference type="UniPathway" id="UPA00638"/>
<dbReference type="Proteomes" id="UP000000558">
    <property type="component" value="Chromosome"/>
</dbReference>
<dbReference type="Proteomes" id="UP000002519">
    <property type="component" value="Chromosome"/>
</dbReference>
<dbReference type="GO" id="GO:0005737">
    <property type="term" value="C:cytoplasm"/>
    <property type="evidence" value="ECO:0007669"/>
    <property type="project" value="UniProtKB-SubCell"/>
</dbReference>
<dbReference type="GO" id="GO:0009055">
    <property type="term" value="F:electron transfer activity"/>
    <property type="evidence" value="ECO:0007669"/>
    <property type="project" value="UniProtKB-UniRule"/>
</dbReference>
<dbReference type="GO" id="GO:0005506">
    <property type="term" value="F:iron ion binding"/>
    <property type="evidence" value="ECO:0007669"/>
    <property type="project" value="InterPro"/>
</dbReference>
<dbReference type="GO" id="GO:0016966">
    <property type="term" value="F:nitric oxide reductase activity"/>
    <property type="evidence" value="ECO:0007669"/>
    <property type="project" value="InterPro"/>
</dbReference>
<dbReference type="CDD" id="cd07709">
    <property type="entry name" value="flavodiiron_proteins_MBL-fold"/>
    <property type="match status" value="1"/>
</dbReference>
<dbReference type="CDD" id="cd00730">
    <property type="entry name" value="rubredoxin"/>
    <property type="match status" value="1"/>
</dbReference>
<dbReference type="FunFam" id="2.20.28.10:FF:000010">
    <property type="entry name" value="Anaerobic nitric oxide reductase flavorubredoxin"/>
    <property type="match status" value="1"/>
</dbReference>
<dbReference type="FunFam" id="3.60.15.10:FF:000009">
    <property type="entry name" value="Anaerobic nitric oxide reductase flavorubredoxin"/>
    <property type="match status" value="1"/>
</dbReference>
<dbReference type="Gene3D" id="2.20.28.10">
    <property type="match status" value="1"/>
</dbReference>
<dbReference type="Gene3D" id="3.40.50.360">
    <property type="match status" value="2"/>
</dbReference>
<dbReference type="Gene3D" id="3.60.15.10">
    <property type="entry name" value="Ribonuclease Z/Hydroxyacylglutathione hydrolase-like"/>
    <property type="match status" value="1"/>
</dbReference>
<dbReference type="HAMAP" id="MF_01312">
    <property type="entry name" value="NorV"/>
    <property type="match status" value="1"/>
</dbReference>
<dbReference type="InterPro" id="IPR023957">
    <property type="entry name" value="Anaer_NO_rdtase_flvorubredoxin"/>
</dbReference>
<dbReference type="InterPro" id="IPR029039">
    <property type="entry name" value="Flavoprotein-like_sf"/>
</dbReference>
<dbReference type="InterPro" id="IPR001279">
    <property type="entry name" value="Metallo-B-lactamas"/>
</dbReference>
<dbReference type="InterPro" id="IPR045761">
    <property type="entry name" value="ODP_dom"/>
</dbReference>
<dbReference type="InterPro" id="IPR036866">
    <property type="entry name" value="RibonucZ/Hydroxyglut_hydro"/>
</dbReference>
<dbReference type="InterPro" id="IPR024934">
    <property type="entry name" value="Rubredoxin-like_dom"/>
</dbReference>
<dbReference type="InterPro" id="IPR024935">
    <property type="entry name" value="Rubredoxin_dom"/>
</dbReference>
<dbReference type="PANTHER" id="PTHR43717">
    <property type="entry name" value="ANAEROBIC NITRIC OXIDE REDUCTASE FLAVORUBREDOXIN"/>
    <property type="match status" value="1"/>
</dbReference>
<dbReference type="PANTHER" id="PTHR43717:SF1">
    <property type="entry name" value="ANAEROBIC NITRIC OXIDE REDUCTASE FLAVORUBREDOXIN"/>
    <property type="match status" value="1"/>
</dbReference>
<dbReference type="Pfam" id="PF19583">
    <property type="entry name" value="ODP"/>
    <property type="match status" value="1"/>
</dbReference>
<dbReference type="Pfam" id="PF00301">
    <property type="entry name" value="Rubredoxin"/>
    <property type="match status" value="1"/>
</dbReference>
<dbReference type="PRINTS" id="PR00163">
    <property type="entry name" value="RUBREDOXIN"/>
</dbReference>
<dbReference type="SMART" id="SM00849">
    <property type="entry name" value="Lactamase_B"/>
    <property type="match status" value="1"/>
</dbReference>
<dbReference type="SUPFAM" id="SSF56281">
    <property type="entry name" value="Metallo-hydrolase/oxidoreductase"/>
    <property type="match status" value="1"/>
</dbReference>
<dbReference type="SUPFAM" id="SSF57802">
    <property type="entry name" value="Rubredoxin-like"/>
    <property type="match status" value="1"/>
</dbReference>
<dbReference type="PROSITE" id="PS50903">
    <property type="entry name" value="RUBREDOXIN_LIKE"/>
    <property type="match status" value="1"/>
</dbReference>
<proteinExistence type="inferred from homology"/>
<gene>
    <name evidence="2" type="primary">norV</name>
    <name evidence="2" type="synonym">flrD</name>
    <name type="ordered locus">Z4018</name>
    <name type="ordered locus">ECs3566</name>
</gene>
<accession>Q8X852</accession>
<reference key="1">
    <citation type="journal article" date="2001" name="Nature">
        <title>Genome sequence of enterohaemorrhagic Escherichia coli O157:H7.</title>
        <authorList>
            <person name="Perna N.T."/>
            <person name="Plunkett G. III"/>
            <person name="Burland V."/>
            <person name="Mau B."/>
            <person name="Glasner J.D."/>
            <person name="Rose D.J."/>
            <person name="Mayhew G.F."/>
            <person name="Evans P.S."/>
            <person name="Gregor J."/>
            <person name="Kirkpatrick H.A."/>
            <person name="Posfai G."/>
            <person name="Hackett J."/>
            <person name="Klink S."/>
            <person name="Boutin A."/>
            <person name="Shao Y."/>
            <person name="Miller L."/>
            <person name="Grotbeck E.J."/>
            <person name="Davis N.W."/>
            <person name="Lim A."/>
            <person name="Dimalanta E.T."/>
            <person name="Potamousis K."/>
            <person name="Apodaca J."/>
            <person name="Anantharaman T.S."/>
            <person name="Lin J."/>
            <person name="Yen G."/>
            <person name="Schwartz D.C."/>
            <person name="Welch R.A."/>
            <person name="Blattner F.R."/>
        </authorList>
    </citation>
    <scope>NUCLEOTIDE SEQUENCE [LARGE SCALE GENOMIC DNA]</scope>
    <source>
        <strain>O157:H7 / EDL933 / ATCC 700927 / EHEC</strain>
    </source>
</reference>
<reference key="2">
    <citation type="journal article" date="2001" name="DNA Res.">
        <title>Complete genome sequence of enterohemorrhagic Escherichia coli O157:H7 and genomic comparison with a laboratory strain K-12.</title>
        <authorList>
            <person name="Hayashi T."/>
            <person name="Makino K."/>
            <person name="Ohnishi M."/>
            <person name="Kurokawa K."/>
            <person name="Ishii K."/>
            <person name="Yokoyama K."/>
            <person name="Han C.-G."/>
            <person name="Ohtsubo E."/>
            <person name="Nakayama K."/>
            <person name="Murata T."/>
            <person name="Tanaka M."/>
            <person name="Tobe T."/>
            <person name="Iida T."/>
            <person name="Takami H."/>
            <person name="Honda T."/>
            <person name="Sasakawa C."/>
            <person name="Ogasawara N."/>
            <person name="Yasunaga T."/>
            <person name="Kuhara S."/>
            <person name="Shiba T."/>
            <person name="Hattori M."/>
            <person name="Shinagawa H."/>
        </authorList>
    </citation>
    <scope>NUCLEOTIDE SEQUENCE [LARGE SCALE GENOMIC DNA]</scope>
    <source>
        <strain>O157:H7 / Sakai / RIMD 0509952 / EHEC</strain>
    </source>
</reference>
<keyword id="KW-0963">Cytoplasm</keyword>
<keyword id="KW-0249">Electron transport</keyword>
<keyword id="KW-0408">Iron</keyword>
<keyword id="KW-0479">Metal-binding</keyword>
<keyword id="KW-0560">Oxidoreductase</keyword>
<keyword id="KW-1185">Reference proteome</keyword>
<keyword id="KW-0813">Transport</keyword>
<evidence type="ECO:0000250" key="1"/>
<evidence type="ECO:0000255" key="2">
    <source>
        <dbReference type="HAMAP-Rule" id="MF_01312"/>
    </source>
</evidence>
<evidence type="ECO:0000305" key="3"/>
<sequence>MSIVVKNNIHWVGQRDWEVRDFHGTEYKTLRGSSYNSYLIREEKNVLIDTVDHKFSREFVQNLRNEIDLADIDYIVINHAEEDHAGALTELMAQIPDTPIYCTANAIDSINGHHHHPEWNFNVVKTGDTLDIGNGKQLIFVETPMLHWPDSMMTYLTGDAVLFSNDAFGQHYCDEHLFNDEVDQTELFEQCQRYYANILTPFSRLVTPKITEILGFNLPVDMIATSHGVVWRDNPTQIVELYLKWAADYQEDRITIFYDTMSNNTRMMADAIAQGIAETDPRVAVDRLSTRLQDAGFEMSLSLKAKWRPDQDALELCREHGREIARQWALAPLPQSTVNTVVKEETSATTTADLGPRMQCSVCQWIYDPAKGEPMQDVAPGTPWSEVPDNFLCPECSLGKDVFDELASEAK</sequence>